<keyword id="KW-0066">ATP synthesis</keyword>
<keyword id="KW-1003">Cell membrane</keyword>
<keyword id="KW-0375">Hydrogen ion transport</keyword>
<keyword id="KW-0406">Ion transport</keyword>
<keyword id="KW-0472">Membrane</keyword>
<keyword id="KW-1185">Reference proteome</keyword>
<keyword id="KW-0813">Transport</keyword>
<organism>
    <name type="scientific">Methanothermobacter thermautotrophicus (strain ATCC 29096 / DSM 1053 / JCM 10044 / NBRC 100330 / Delta H)</name>
    <name type="common">Methanobacterium thermoautotrophicum</name>
    <dbReference type="NCBI Taxonomy" id="187420"/>
    <lineage>
        <taxon>Archaea</taxon>
        <taxon>Methanobacteriati</taxon>
        <taxon>Methanobacteriota</taxon>
        <taxon>Methanomada group</taxon>
        <taxon>Methanobacteria</taxon>
        <taxon>Methanobacteriales</taxon>
        <taxon>Methanobacteriaceae</taxon>
        <taxon>Methanothermobacter</taxon>
    </lineage>
</organism>
<name>AATF_METTH</name>
<proteinExistence type="inferred from homology"/>
<dbReference type="EMBL" id="AE000666">
    <property type="protein sequence ID" value="AAB85452.1"/>
    <property type="molecule type" value="Genomic_DNA"/>
</dbReference>
<dbReference type="PIR" id="H69227">
    <property type="entry name" value="H69227"/>
</dbReference>
<dbReference type="RefSeq" id="WP_010876587.1">
    <property type="nucleotide sequence ID" value="NC_000916.1"/>
</dbReference>
<dbReference type="SMR" id="O27037"/>
<dbReference type="FunCoup" id="O27037">
    <property type="interactions" value="46"/>
</dbReference>
<dbReference type="IntAct" id="O27037">
    <property type="interactions" value="1"/>
</dbReference>
<dbReference type="STRING" id="187420.MTH_956"/>
<dbReference type="PaxDb" id="187420-MTH_956"/>
<dbReference type="EnsemblBacteria" id="AAB85452">
    <property type="protein sequence ID" value="AAB85452"/>
    <property type="gene ID" value="MTH_956"/>
</dbReference>
<dbReference type="KEGG" id="mth:MTH_956"/>
<dbReference type="PATRIC" id="fig|187420.15.peg.939"/>
<dbReference type="HOGENOM" id="CLU_135754_2_0_2"/>
<dbReference type="InParanoid" id="O27037"/>
<dbReference type="Proteomes" id="UP000005223">
    <property type="component" value="Chromosome"/>
</dbReference>
<dbReference type="GO" id="GO:0005886">
    <property type="term" value="C:plasma membrane"/>
    <property type="evidence" value="ECO:0007669"/>
    <property type="project" value="UniProtKB-SubCell"/>
</dbReference>
<dbReference type="GO" id="GO:0005524">
    <property type="term" value="F:ATP binding"/>
    <property type="evidence" value="ECO:0007669"/>
    <property type="project" value="UniProtKB-UniRule"/>
</dbReference>
<dbReference type="GO" id="GO:0046933">
    <property type="term" value="F:proton-transporting ATP synthase activity, rotational mechanism"/>
    <property type="evidence" value="ECO:0007669"/>
    <property type="project" value="UniProtKB-UniRule"/>
</dbReference>
<dbReference type="GO" id="GO:0046961">
    <property type="term" value="F:proton-transporting ATPase activity, rotational mechanism"/>
    <property type="evidence" value="ECO:0007669"/>
    <property type="project" value="InterPro"/>
</dbReference>
<dbReference type="GO" id="GO:0042777">
    <property type="term" value="P:proton motive force-driven plasma membrane ATP synthesis"/>
    <property type="evidence" value="ECO:0007669"/>
    <property type="project" value="UniProtKB-UniRule"/>
</dbReference>
<dbReference type="Gene3D" id="3.40.50.10580">
    <property type="entry name" value="ATPase, V1 complex, subunit F"/>
    <property type="match status" value="1"/>
</dbReference>
<dbReference type="HAMAP" id="MF_00312">
    <property type="entry name" value="ATP_synth_F_arch"/>
    <property type="match status" value="1"/>
</dbReference>
<dbReference type="InterPro" id="IPR008218">
    <property type="entry name" value="ATPase_V1-cplx_f_g_su"/>
</dbReference>
<dbReference type="InterPro" id="IPR022944">
    <property type="entry name" value="ATPase_V1-cplx_fsu_bac/arc"/>
</dbReference>
<dbReference type="InterPro" id="IPR036906">
    <property type="entry name" value="ATPase_V1_fsu_sf"/>
</dbReference>
<dbReference type="NCBIfam" id="NF003047">
    <property type="entry name" value="PRK03957.1"/>
    <property type="match status" value="1"/>
</dbReference>
<dbReference type="PANTHER" id="PTHR13861:SF2">
    <property type="entry name" value="V-TYPE PROTON ATPASE SUBUNIT F"/>
    <property type="match status" value="1"/>
</dbReference>
<dbReference type="PANTHER" id="PTHR13861">
    <property type="entry name" value="VACUOLAR ATP SYNTHASE SUBUNIT F"/>
    <property type="match status" value="1"/>
</dbReference>
<dbReference type="Pfam" id="PF01990">
    <property type="entry name" value="ATP-synt_F"/>
    <property type="match status" value="1"/>
</dbReference>
<dbReference type="SUPFAM" id="SSF159468">
    <property type="entry name" value="AtpF-like"/>
    <property type="match status" value="1"/>
</dbReference>
<feature type="chain" id="PRO_0000144820" description="A-type ATP synthase subunit F">
    <location>
        <begin position="1"/>
        <end position="106"/>
    </location>
</feature>
<reference key="1">
    <citation type="journal article" date="1997" name="J. Bacteriol.">
        <title>Complete genome sequence of Methanobacterium thermoautotrophicum deltaH: functional analysis and comparative genomics.</title>
        <authorList>
            <person name="Smith D.R."/>
            <person name="Doucette-Stamm L.A."/>
            <person name="Deloughery C."/>
            <person name="Lee H.-M."/>
            <person name="Dubois J."/>
            <person name="Aldredge T."/>
            <person name="Bashirzadeh R."/>
            <person name="Blakely D."/>
            <person name="Cook R."/>
            <person name="Gilbert K."/>
            <person name="Harrison D."/>
            <person name="Hoang L."/>
            <person name="Keagle P."/>
            <person name="Lumm W."/>
            <person name="Pothier B."/>
            <person name="Qiu D."/>
            <person name="Spadafora R."/>
            <person name="Vicare R."/>
            <person name="Wang Y."/>
            <person name="Wierzbowski J."/>
            <person name="Gibson R."/>
            <person name="Jiwani N."/>
            <person name="Caruso A."/>
            <person name="Bush D."/>
            <person name="Safer H."/>
            <person name="Patwell D."/>
            <person name="Prabhakar S."/>
            <person name="McDougall S."/>
            <person name="Shimer G."/>
            <person name="Goyal A."/>
            <person name="Pietrovski S."/>
            <person name="Church G.M."/>
            <person name="Daniels C.J."/>
            <person name="Mao J.-I."/>
            <person name="Rice P."/>
            <person name="Noelling J."/>
            <person name="Reeve J.N."/>
        </authorList>
    </citation>
    <scope>NUCLEOTIDE SEQUENCE [LARGE SCALE GENOMIC DNA]</scope>
    <source>
        <strain>ATCC 29096 / DSM 1053 / JCM 10044 / NBRC 100330 / Delta H</strain>
    </source>
</reference>
<comment type="function">
    <text evidence="1">Component of the A-type ATP synthase that produces ATP from ADP in the presence of a proton gradient across the membrane.</text>
</comment>
<comment type="subunit">
    <text evidence="1">Has multiple subunits with at least A(3), B(3), C, D, E, F, H, I and proteolipid K(x).</text>
</comment>
<comment type="subcellular location">
    <subcellularLocation>
        <location evidence="1">Cell membrane</location>
        <topology evidence="1">Peripheral membrane protein</topology>
    </subcellularLocation>
</comment>
<comment type="similarity">
    <text evidence="1">Belongs to the V-ATPase F subunit family.</text>
</comment>
<accession>O27037</accession>
<protein>
    <recommendedName>
        <fullName evidence="1">A-type ATP synthase subunit F</fullName>
    </recommendedName>
</protein>
<evidence type="ECO:0000255" key="1">
    <source>
        <dbReference type="HAMAP-Rule" id="MF_00312"/>
    </source>
</evidence>
<sequence>MSSNIAVVGDRDTVTGFRLGGVREGYVVETPDEAEETIRNLIRDGFSIIIVTEKIGDELREFIEETTSSSALPMIIEIPDKTGPSERETDPLRDLIKRVIGVEMVK</sequence>
<gene>
    <name evidence="1" type="primary">atpF</name>
    <name type="ordered locus">MTH_956</name>
</gene>